<reference key="1">
    <citation type="journal article" date="2001" name="Nature">
        <title>Massive gene decay in the leprosy bacillus.</title>
        <authorList>
            <person name="Cole S.T."/>
            <person name="Eiglmeier K."/>
            <person name="Parkhill J."/>
            <person name="James K.D."/>
            <person name="Thomson N.R."/>
            <person name="Wheeler P.R."/>
            <person name="Honore N."/>
            <person name="Garnier T."/>
            <person name="Churcher C.M."/>
            <person name="Harris D.E."/>
            <person name="Mungall K.L."/>
            <person name="Basham D."/>
            <person name="Brown D."/>
            <person name="Chillingworth T."/>
            <person name="Connor R."/>
            <person name="Davies R.M."/>
            <person name="Devlin K."/>
            <person name="Duthoy S."/>
            <person name="Feltwell T."/>
            <person name="Fraser A."/>
            <person name="Hamlin N."/>
            <person name="Holroyd S."/>
            <person name="Hornsby T."/>
            <person name="Jagels K."/>
            <person name="Lacroix C."/>
            <person name="Maclean J."/>
            <person name="Moule S."/>
            <person name="Murphy L.D."/>
            <person name="Oliver K."/>
            <person name="Quail M.A."/>
            <person name="Rajandream M.A."/>
            <person name="Rutherford K.M."/>
            <person name="Rutter S."/>
            <person name="Seeger K."/>
            <person name="Simon S."/>
            <person name="Simmonds M."/>
            <person name="Skelton J."/>
            <person name="Squares R."/>
            <person name="Squares S."/>
            <person name="Stevens K."/>
            <person name="Taylor K."/>
            <person name="Whitehead S."/>
            <person name="Woodward J.R."/>
            <person name="Barrell B.G."/>
        </authorList>
    </citation>
    <scope>NUCLEOTIDE SEQUENCE [LARGE SCALE GENOMIC DNA]</scope>
    <source>
        <strain>TN</strain>
    </source>
</reference>
<dbReference type="EC" id="2.1.1.45" evidence="1"/>
<dbReference type="EMBL" id="AL583922">
    <property type="protein sequence ID" value="CAC30470.1"/>
    <property type="molecule type" value="Genomic_DNA"/>
</dbReference>
<dbReference type="PIR" id="A87099">
    <property type="entry name" value="A87099"/>
</dbReference>
<dbReference type="RefSeq" id="NP_302064.1">
    <property type="nucleotide sequence ID" value="NC_002677.1"/>
</dbReference>
<dbReference type="RefSeq" id="WP_010908385.1">
    <property type="nucleotide sequence ID" value="NC_002677.1"/>
</dbReference>
<dbReference type="SMR" id="Q9CBW0"/>
<dbReference type="STRING" id="272631.gene:17575360"/>
<dbReference type="KEGG" id="mle:ML1519"/>
<dbReference type="PATRIC" id="fig|272631.5.peg.2862"/>
<dbReference type="Leproma" id="ML1519"/>
<dbReference type="eggNOG" id="COG0207">
    <property type="taxonomic scope" value="Bacteria"/>
</dbReference>
<dbReference type="HOGENOM" id="CLU_021669_0_0_11"/>
<dbReference type="OrthoDB" id="9774633at2"/>
<dbReference type="UniPathway" id="UPA00575"/>
<dbReference type="Proteomes" id="UP000000806">
    <property type="component" value="Chromosome"/>
</dbReference>
<dbReference type="GO" id="GO:0005829">
    <property type="term" value="C:cytosol"/>
    <property type="evidence" value="ECO:0007669"/>
    <property type="project" value="TreeGrafter"/>
</dbReference>
<dbReference type="GO" id="GO:0004799">
    <property type="term" value="F:thymidylate synthase activity"/>
    <property type="evidence" value="ECO:0007669"/>
    <property type="project" value="UniProtKB-UniRule"/>
</dbReference>
<dbReference type="GO" id="GO:0006231">
    <property type="term" value="P:dTMP biosynthetic process"/>
    <property type="evidence" value="ECO:0007669"/>
    <property type="project" value="UniProtKB-UniRule"/>
</dbReference>
<dbReference type="GO" id="GO:0006235">
    <property type="term" value="P:dTTP biosynthetic process"/>
    <property type="evidence" value="ECO:0007669"/>
    <property type="project" value="UniProtKB-UniRule"/>
</dbReference>
<dbReference type="GO" id="GO:0032259">
    <property type="term" value="P:methylation"/>
    <property type="evidence" value="ECO:0007669"/>
    <property type="project" value="UniProtKB-KW"/>
</dbReference>
<dbReference type="CDD" id="cd00351">
    <property type="entry name" value="TS_Pyrimidine_HMase"/>
    <property type="match status" value="1"/>
</dbReference>
<dbReference type="FunFam" id="3.30.572.10:FF:000001">
    <property type="entry name" value="Thymidylate synthase"/>
    <property type="match status" value="1"/>
</dbReference>
<dbReference type="Gene3D" id="3.30.572.10">
    <property type="entry name" value="Thymidylate synthase/dCMP hydroxymethylase domain"/>
    <property type="match status" value="1"/>
</dbReference>
<dbReference type="HAMAP" id="MF_00008">
    <property type="entry name" value="Thymidy_synth_bact"/>
    <property type="match status" value="1"/>
</dbReference>
<dbReference type="InterPro" id="IPR045097">
    <property type="entry name" value="Thymidate_synth/dCMP_Mease"/>
</dbReference>
<dbReference type="InterPro" id="IPR023451">
    <property type="entry name" value="Thymidate_synth/dCMP_Mease_dom"/>
</dbReference>
<dbReference type="InterPro" id="IPR036926">
    <property type="entry name" value="Thymidate_synth/dCMP_Mease_sf"/>
</dbReference>
<dbReference type="InterPro" id="IPR000398">
    <property type="entry name" value="Thymidylate_synthase"/>
</dbReference>
<dbReference type="InterPro" id="IPR020940">
    <property type="entry name" value="Thymidylate_synthase_AS"/>
</dbReference>
<dbReference type="NCBIfam" id="NF002497">
    <property type="entry name" value="PRK01827.1-3"/>
    <property type="match status" value="1"/>
</dbReference>
<dbReference type="NCBIfam" id="NF002499">
    <property type="entry name" value="PRK01827.1-5"/>
    <property type="match status" value="1"/>
</dbReference>
<dbReference type="NCBIfam" id="TIGR03284">
    <property type="entry name" value="thym_sym"/>
    <property type="match status" value="2"/>
</dbReference>
<dbReference type="PANTHER" id="PTHR11548:SF9">
    <property type="entry name" value="THYMIDYLATE SYNTHASE"/>
    <property type="match status" value="1"/>
</dbReference>
<dbReference type="PANTHER" id="PTHR11548">
    <property type="entry name" value="THYMIDYLATE SYNTHASE 1"/>
    <property type="match status" value="1"/>
</dbReference>
<dbReference type="Pfam" id="PF00303">
    <property type="entry name" value="Thymidylat_synt"/>
    <property type="match status" value="1"/>
</dbReference>
<dbReference type="PRINTS" id="PR00108">
    <property type="entry name" value="THYMDSNTHASE"/>
</dbReference>
<dbReference type="SUPFAM" id="SSF55831">
    <property type="entry name" value="Thymidylate synthase/dCMP hydroxymethylase"/>
    <property type="match status" value="1"/>
</dbReference>
<dbReference type="PROSITE" id="PS00091">
    <property type="entry name" value="THYMIDYLATE_SYNTHASE"/>
    <property type="match status" value="1"/>
</dbReference>
<accession>Q9CBW0</accession>
<protein>
    <recommendedName>
        <fullName evidence="1">Thymidylate synthase</fullName>
        <shortName evidence="1">TS</shortName>
        <shortName evidence="1">TSase</shortName>
        <ecNumber evidence="1">2.1.1.45</ecNumber>
    </recommendedName>
</protein>
<gene>
    <name evidence="1" type="primary">thyA</name>
    <name type="ordered locus">ML1519</name>
</gene>
<keyword id="KW-0963">Cytoplasm</keyword>
<keyword id="KW-0489">Methyltransferase</keyword>
<keyword id="KW-0545">Nucleotide biosynthesis</keyword>
<keyword id="KW-1185">Reference proteome</keyword>
<keyword id="KW-0808">Transferase</keyword>
<comment type="function">
    <text evidence="1">Catalyzes the reductive methylation of 2'-deoxyuridine-5'-monophosphate (dUMP) to 2'-deoxythymidine-5'-monophosphate (dTMP) while utilizing 5,10-methylenetetrahydrofolate (mTHF) as the methyl donor and reductant in the reaction, yielding dihydrofolate (DHF) as a by-product. This enzymatic reaction provides an intracellular de novo source of dTMP, an essential precursor for DNA biosynthesis.</text>
</comment>
<comment type="catalytic activity">
    <reaction evidence="1">
        <text>dUMP + (6R)-5,10-methylene-5,6,7,8-tetrahydrofolate = 7,8-dihydrofolate + dTMP</text>
        <dbReference type="Rhea" id="RHEA:12104"/>
        <dbReference type="ChEBI" id="CHEBI:15636"/>
        <dbReference type="ChEBI" id="CHEBI:57451"/>
        <dbReference type="ChEBI" id="CHEBI:63528"/>
        <dbReference type="ChEBI" id="CHEBI:246422"/>
        <dbReference type="EC" id="2.1.1.45"/>
    </reaction>
</comment>
<comment type="pathway">
    <text evidence="1">Pyrimidine metabolism; dTTP biosynthesis.</text>
</comment>
<comment type="subunit">
    <text evidence="1">Homodimer.</text>
</comment>
<comment type="subcellular location">
    <subcellularLocation>
        <location evidence="1">Cytoplasm</location>
    </subcellularLocation>
</comment>
<comment type="similarity">
    <text evidence="1">Belongs to the thymidylate synthase family. Bacterial-type ThyA subfamily.</text>
</comment>
<name>TYSY_MYCLE</name>
<evidence type="ECO:0000255" key="1">
    <source>
        <dbReference type="HAMAP-Rule" id="MF_00008"/>
    </source>
</evidence>
<feature type="chain" id="PRO_0000140989" description="Thymidylate synthase">
    <location>
        <begin position="1"/>
        <end position="266"/>
    </location>
</feature>
<feature type="active site" description="Nucleophile" evidence="1">
    <location>
        <position position="149"/>
    </location>
</feature>
<feature type="binding site" description="in other chain" evidence="1">
    <location>
        <position position="24"/>
    </location>
    <ligand>
        <name>dUMP</name>
        <dbReference type="ChEBI" id="CHEBI:246422"/>
        <note>ligand shared between dimeric partners</note>
    </ligand>
</feature>
<feature type="binding site" evidence="1">
    <location>
        <position position="54"/>
    </location>
    <ligand>
        <name>(6R)-5,10-methylene-5,6,7,8-tetrahydrofolate</name>
        <dbReference type="ChEBI" id="CHEBI:15636"/>
    </ligand>
</feature>
<feature type="binding site" evidence="1">
    <location>
        <begin position="129"/>
        <end position="130"/>
    </location>
    <ligand>
        <name>dUMP</name>
        <dbReference type="ChEBI" id="CHEBI:246422"/>
        <note>ligand shared between dimeric partners</note>
    </ligand>
</feature>
<feature type="binding site" description="in other chain" evidence="1">
    <location>
        <begin position="169"/>
        <end position="172"/>
    </location>
    <ligand>
        <name>dUMP</name>
        <dbReference type="ChEBI" id="CHEBI:246422"/>
        <note>ligand shared between dimeric partners</note>
    </ligand>
</feature>
<feature type="binding site" evidence="1">
    <location>
        <position position="172"/>
    </location>
    <ligand>
        <name>(6R)-5,10-methylene-5,6,7,8-tetrahydrofolate</name>
        <dbReference type="ChEBI" id="CHEBI:15636"/>
    </ligand>
</feature>
<feature type="binding site" description="in other chain" evidence="1">
    <location>
        <position position="180"/>
    </location>
    <ligand>
        <name>dUMP</name>
        <dbReference type="ChEBI" id="CHEBI:246422"/>
        <note>ligand shared between dimeric partners</note>
    </ligand>
</feature>
<feature type="binding site" description="in other chain" evidence="1">
    <location>
        <begin position="210"/>
        <end position="212"/>
    </location>
    <ligand>
        <name>dUMP</name>
        <dbReference type="ChEBI" id="CHEBI:246422"/>
        <note>ligand shared between dimeric partners</note>
    </ligand>
</feature>
<feature type="binding site" evidence="1">
    <location>
        <position position="265"/>
    </location>
    <ligand>
        <name>(6R)-5,10-methylene-5,6,7,8-tetrahydrofolate</name>
        <dbReference type="ChEBI" id="CHEBI:15636"/>
    </ligand>
</feature>
<sequence>MLIATPYEDLLRLVLDCGVAKMDRTGTGTRSLFGQQLRYDLSVGFPLVTTKKVHFKSVVYELLWFLRGDSNVAWLHEHGVNIWDEWASSTGDLGPIYGVQWRSWPTSSGDYIDQISTALDLLRTEPDSRRIIVSAWNVGEIPQMALPPCHAFFQFYVAQGRLSCQLYQRSADMFLGVPFNIASYALLTHMMAAQSGLLVGEFVWTGGDCHIYDNHVEQVQLQLSREPRAYPELFLAQRDSIFDYVYEDVVVTNYDPHPAIKAPVAI</sequence>
<organism>
    <name type="scientific">Mycobacterium leprae (strain TN)</name>
    <dbReference type="NCBI Taxonomy" id="272631"/>
    <lineage>
        <taxon>Bacteria</taxon>
        <taxon>Bacillati</taxon>
        <taxon>Actinomycetota</taxon>
        <taxon>Actinomycetes</taxon>
        <taxon>Mycobacteriales</taxon>
        <taxon>Mycobacteriaceae</taxon>
        <taxon>Mycobacterium</taxon>
    </lineage>
</organism>
<proteinExistence type="inferred from homology"/>